<proteinExistence type="evidence at protein level"/>
<accession>C8YJ98</accession>
<feature type="signal peptide" evidence="1">
    <location>
        <begin position="1"/>
        <end position="22"/>
    </location>
</feature>
<feature type="chain" id="PRO_5002993453" description="Tabinhibitin 3" evidence="5">
    <location>
        <begin position="23"/>
        <end position="253"/>
    </location>
</feature>
<feature type="domain" description="SCP" evidence="1">
    <location>
        <begin position="66"/>
        <end position="209"/>
    </location>
</feature>
<feature type="short sequence motif" description="Cell attachment site" evidence="5">
    <location>
        <begin position="222"/>
        <end position="224"/>
    </location>
</feature>
<evidence type="ECO:0000255" key="1"/>
<evidence type="ECO:0000269" key="2">
    <source>
    </source>
</evidence>
<evidence type="ECO:0000303" key="3">
    <source>
    </source>
</evidence>
<evidence type="ECO:0000305" key="4"/>
<evidence type="ECO:0000305" key="5">
    <source>
    </source>
</evidence>
<evidence type="ECO:0000312" key="6">
    <source>
        <dbReference type="EMBL" id="ACS72293.1"/>
    </source>
</evidence>
<protein>
    <recommendedName>
        <fullName evidence="3">Tabinhibitin 3</fullName>
    </recommendedName>
</protein>
<comment type="function">
    <text evidence="2">Inhibits platelet aggregation induced by all agonists tested (ADP, arachidonic acid, the thromboxane A2 analog U46619, thrombin, and snake venom snaclecs (TMVA that activates platelet through GPIB, and stejnulxin that specifically acts through GPVI (GP6))) (PubMed:19531497). May act by competing with fibrinogen for binding to glycoprotein IIb/IIIa (ITGA2B/ITGB3) (PubMed:19531497).</text>
</comment>
<comment type="subcellular location">
    <subcellularLocation>
        <location evidence="2">Secreted</location>
    </subcellularLocation>
</comment>
<comment type="tissue specificity">
    <text evidence="5">Expressed in salivary glands.</text>
</comment>
<comment type="similarity">
    <text evidence="4">Belongs to the CRISP family.</text>
</comment>
<sequence length="253" mass="28024">MTLKRIFCAALALIVLQSVASAVDYCRLSCPEGRDHVGCRNAGFGAHCGSNPQTPKLHQEHIKMVLQKTNWLRGVVAEGSFCYPKAARMPVLVWDDDLANLASLHTKGCVTETNKCRSTERFHSPGQSSYEISGDTLPSAMDILNFALRDWYLQKDNLTRKDIGSYPAGEDKGLKNMANLISDKVTAIGCGLTHWEEGKLKRALFTCNFSSSNVPGHPIYQRGDNFATKCAKTHPYYKSLCNSDEHIKPNNNV</sequence>
<reference evidence="6" key="1">
    <citation type="journal article" date="2009" name="Mol. Cell. Proteomics">
        <title>Anti-thrombosis repertoire of blood-feeding horsefly salivary glands.</title>
        <authorList>
            <person name="Ma D."/>
            <person name="Wang Y."/>
            <person name="Yang H."/>
            <person name="Wu J."/>
            <person name="An S."/>
            <person name="Gao L."/>
            <person name="Xu X."/>
            <person name="Lai R."/>
        </authorList>
    </citation>
    <scope>NUCLEOTIDE SEQUENCE [MRNA]</scope>
    <scope>PROTEIN SEQUENCE OF 24-46; 89-106; 122-142; 162-171 AND 203-224</scope>
    <scope>SUBCELLULAR LOCATION</scope>
    <scope>FUNCTION</scope>
    <source>
        <tissue>Salivary gland</tissue>
    </source>
</reference>
<dbReference type="EMBL" id="FJ469605">
    <property type="protein sequence ID" value="ACS72293.1"/>
    <property type="molecule type" value="mRNA"/>
</dbReference>
<dbReference type="SMR" id="C8YJ98"/>
<dbReference type="GO" id="GO:0005576">
    <property type="term" value="C:extracellular region"/>
    <property type="evidence" value="ECO:0007669"/>
    <property type="project" value="UniProtKB-SubCell"/>
</dbReference>
<dbReference type="GO" id="GO:0090729">
    <property type="term" value="F:toxin activity"/>
    <property type="evidence" value="ECO:0007669"/>
    <property type="project" value="UniProtKB-KW"/>
</dbReference>
<dbReference type="CDD" id="cd05380">
    <property type="entry name" value="CAP_euk"/>
    <property type="match status" value="1"/>
</dbReference>
<dbReference type="Gene3D" id="3.40.33.10">
    <property type="entry name" value="CAP"/>
    <property type="match status" value="1"/>
</dbReference>
<dbReference type="InterPro" id="IPR014044">
    <property type="entry name" value="CAP_dom"/>
</dbReference>
<dbReference type="InterPro" id="IPR035940">
    <property type="entry name" value="CAP_sf"/>
</dbReference>
<dbReference type="InterPro" id="IPR034763">
    <property type="entry name" value="P14a_insect"/>
</dbReference>
<dbReference type="Pfam" id="PF00188">
    <property type="entry name" value="CAP"/>
    <property type="match status" value="1"/>
</dbReference>
<dbReference type="PIRSF" id="PIRSF038921">
    <property type="entry name" value="P14a"/>
    <property type="match status" value="1"/>
</dbReference>
<dbReference type="SMART" id="SM00198">
    <property type="entry name" value="SCP"/>
    <property type="match status" value="1"/>
</dbReference>
<dbReference type="SUPFAM" id="SSF55797">
    <property type="entry name" value="PR-1-like"/>
    <property type="match status" value="1"/>
</dbReference>
<organism>
    <name type="scientific">Tabanus yao</name>
    <name type="common">Horsefly</name>
    <dbReference type="NCBI Taxonomy" id="485572"/>
    <lineage>
        <taxon>Eukaryota</taxon>
        <taxon>Metazoa</taxon>
        <taxon>Ecdysozoa</taxon>
        <taxon>Arthropoda</taxon>
        <taxon>Hexapoda</taxon>
        <taxon>Insecta</taxon>
        <taxon>Pterygota</taxon>
        <taxon>Neoptera</taxon>
        <taxon>Endopterygota</taxon>
        <taxon>Diptera</taxon>
        <taxon>Brachycera</taxon>
        <taxon>Tabanomorpha</taxon>
        <taxon>Tabanoidea</taxon>
        <taxon>Tabanidae</taxon>
        <taxon>Tabanus</taxon>
    </lineage>
</organism>
<name>INH3_TABYA</name>
<keyword id="KW-1217">Cell adhesion impairing toxin</keyword>
<keyword id="KW-0903">Direct protein sequencing</keyword>
<keyword id="KW-1199">Hemostasis impairing toxin</keyword>
<keyword id="KW-1201">Platelet aggregation inhibiting toxin</keyword>
<keyword id="KW-0964">Secreted</keyword>
<keyword id="KW-0732">Signal</keyword>
<keyword id="KW-0800">Toxin</keyword>